<protein>
    <recommendedName>
        <fullName evidence="2">D-alanine--D-alanine ligase</fullName>
        <ecNumber evidence="2">6.3.2.4</ecNumber>
    </recommendedName>
    <alternativeName>
        <fullName evidence="2">D-Ala-D-Ala ligase</fullName>
    </alternativeName>
    <alternativeName>
        <fullName evidence="2">D-alanylalanine synthetase</fullName>
    </alternativeName>
</protein>
<gene>
    <name evidence="2" type="primary">ddl</name>
    <name type="ordered locus">WD_0095</name>
</gene>
<name>DDL_WOLPM</name>
<feature type="chain" id="PRO_0000341195" description="D-alanine--D-alanine ligase">
    <location>
        <begin position="1"/>
        <end position="315"/>
    </location>
</feature>
<feature type="domain" description="ATP-grasp" evidence="2">
    <location>
        <begin position="101"/>
        <end position="297"/>
    </location>
</feature>
<feature type="binding site" evidence="2">
    <location>
        <begin position="128"/>
        <end position="181"/>
    </location>
    <ligand>
        <name>ATP</name>
        <dbReference type="ChEBI" id="CHEBI:30616"/>
    </ligand>
</feature>
<feature type="binding site" evidence="2">
    <location>
        <position position="249"/>
    </location>
    <ligand>
        <name>Mg(2+)</name>
        <dbReference type="ChEBI" id="CHEBI:18420"/>
        <label>1</label>
    </ligand>
</feature>
<feature type="binding site" evidence="2">
    <location>
        <position position="263"/>
    </location>
    <ligand>
        <name>Mg(2+)</name>
        <dbReference type="ChEBI" id="CHEBI:18420"/>
        <label>1</label>
    </ligand>
</feature>
<feature type="binding site" evidence="2">
    <location>
        <position position="263"/>
    </location>
    <ligand>
        <name>Mg(2+)</name>
        <dbReference type="ChEBI" id="CHEBI:18420"/>
        <label>2</label>
    </ligand>
</feature>
<feature type="binding site" evidence="2">
    <location>
        <position position="265"/>
    </location>
    <ligand>
        <name>Mg(2+)</name>
        <dbReference type="ChEBI" id="CHEBI:18420"/>
        <label>2</label>
    </ligand>
</feature>
<accession>Q73IQ8</accession>
<comment type="function">
    <text evidence="2">Cell wall formation.</text>
</comment>
<comment type="catalytic activity">
    <reaction evidence="2">
        <text>2 D-alanine + ATP = D-alanyl-D-alanine + ADP + phosphate + H(+)</text>
        <dbReference type="Rhea" id="RHEA:11224"/>
        <dbReference type="ChEBI" id="CHEBI:15378"/>
        <dbReference type="ChEBI" id="CHEBI:30616"/>
        <dbReference type="ChEBI" id="CHEBI:43474"/>
        <dbReference type="ChEBI" id="CHEBI:57416"/>
        <dbReference type="ChEBI" id="CHEBI:57822"/>
        <dbReference type="ChEBI" id="CHEBI:456216"/>
        <dbReference type="EC" id="6.3.2.4"/>
    </reaction>
</comment>
<comment type="cofactor">
    <cofactor evidence="1">
        <name>Mg(2+)</name>
        <dbReference type="ChEBI" id="CHEBI:18420"/>
    </cofactor>
    <cofactor evidence="1">
        <name>Mn(2+)</name>
        <dbReference type="ChEBI" id="CHEBI:29035"/>
    </cofactor>
    <text evidence="1">Binds 2 magnesium or manganese ions per subunit.</text>
</comment>
<comment type="pathway">
    <text evidence="2">Cell wall biogenesis; peptidoglycan biosynthesis.</text>
</comment>
<comment type="subcellular location">
    <subcellularLocation>
        <location evidence="2">Cytoplasm</location>
    </subcellularLocation>
</comment>
<comment type="similarity">
    <text evidence="2">Belongs to the D-alanine--D-alanine ligase family.</text>
</comment>
<dbReference type="EC" id="6.3.2.4" evidence="2"/>
<dbReference type="EMBL" id="AE017196">
    <property type="protein sequence ID" value="AAS13853.1"/>
    <property type="molecule type" value="Genomic_DNA"/>
</dbReference>
<dbReference type="SMR" id="Q73IQ8"/>
<dbReference type="EnsemblBacteria" id="AAS13853">
    <property type="protein sequence ID" value="AAS13853"/>
    <property type="gene ID" value="WD_0095"/>
</dbReference>
<dbReference type="KEGG" id="wol:WD_0095"/>
<dbReference type="eggNOG" id="COG1181">
    <property type="taxonomic scope" value="Bacteria"/>
</dbReference>
<dbReference type="UniPathway" id="UPA00219"/>
<dbReference type="Proteomes" id="UP000008215">
    <property type="component" value="Chromosome"/>
</dbReference>
<dbReference type="GO" id="GO:0005737">
    <property type="term" value="C:cytoplasm"/>
    <property type="evidence" value="ECO:0007669"/>
    <property type="project" value="UniProtKB-SubCell"/>
</dbReference>
<dbReference type="GO" id="GO:0005524">
    <property type="term" value="F:ATP binding"/>
    <property type="evidence" value="ECO:0007669"/>
    <property type="project" value="UniProtKB-KW"/>
</dbReference>
<dbReference type="GO" id="GO:0008716">
    <property type="term" value="F:D-alanine-D-alanine ligase activity"/>
    <property type="evidence" value="ECO:0007669"/>
    <property type="project" value="UniProtKB-UniRule"/>
</dbReference>
<dbReference type="GO" id="GO:0046872">
    <property type="term" value="F:metal ion binding"/>
    <property type="evidence" value="ECO:0007669"/>
    <property type="project" value="UniProtKB-KW"/>
</dbReference>
<dbReference type="GO" id="GO:0071555">
    <property type="term" value="P:cell wall organization"/>
    <property type="evidence" value="ECO:0007669"/>
    <property type="project" value="UniProtKB-KW"/>
</dbReference>
<dbReference type="GO" id="GO:0009252">
    <property type="term" value="P:peptidoglycan biosynthetic process"/>
    <property type="evidence" value="ECO:0007669"/>
    <property type="project" value="UniProtKB-UniRule"/>
</dbReference>
<dbReference type="GO" id="GO:0008360">
    <property type="term" value="P:regulation of cell shape"/>
    <property type="evidence" value="ECO:0007669"/>
    <property type="project" value="UniProtKB-KW"/>
</dbReference>
<dbReference type="Gene3D" id="3.40.50.20">
    <property type="match status" value="1"/>
</dbReference>
<dbReference type="Gene3D" id="3.30.1490.20">
    <property type="entry name" value="ATP-grasp fold, A domain"/>
    <property type="match status" value="1"/>
</dbReference>
<dbReference type="Gene3D" id="3.30.470.20">
    <property type="entry name" value="ATP-grasp fold, B domain"/>
    <property type="match status" value="1"/>
</dbReference>
<dbReference type="HAMAP" id="MF_00047">
    <property type="entry name" value="Dala_Dala_lig"/>
    <property type="match status" value="1"/>
</dbReference>
<dbReference type="InterPro" id="IPR011761">
    <property type="entry name" value="ATP-grasp"/>
</dbReference>
<dbReference type="InterPro" id="IPR013815">
    <property type="entry name" value="ATP_grasp_subdomain_1"/>
</dbReference>
<dbReference type="InterPro" id="IPR000291">
    <property type="entry name" value="D-Ala_lig_Van_CS"/>
</dbReference>
<dbReference type="InterPro" id="IPR005905">
    <property type="entry name" value="D_ala_D_ala"/>
</dbReference>
<dbReference type="InterPro" id="IPR011095">
    <property type="entry name" value="Dala_Dala_lig_C"/>
</dbReference>
<dbReference type="InterPro" id="IPR011127">
    <property type="entry name" value="Dala_Dala_lig_N"/>
</dbReference>
<dbReference type="InterPro" id="IPR016185">
    <property type="entry name" value="PreATP-grasp_dom_sf"/>
</dbReference>
<dbReference type="NCBIfam" id="TIGR01205">
    <property type="entry name" value="D_ala_D_alaTIGR"/>
    <property type="match status" value="1"/>
</dbReference>
<dbReference type="NCBIfam" id="NF002378">
    <property type="entry name" value="PRK01372.1"/>
    <property type="match status" value="1"/>
</dbReference>
<dbReference type="PANTHER" id="PTHR23132">
    <property type="entry name" value="D-ALANINE--D-ALANINE LIGASE"/>
    <property type="match status" value="1"/>
</dbReference>
<dbReference type="PANTHER" id="PTHR23132:SF23">
    <property type="entry name" value="D-ALANINE--D-ALANINE LIGASE B"/>
    <property type="match status" value="1"/>
</dbReference>
<dbReference type="Pfam" id="PF07478">
    <property type="entry name" value="Dala_Dala_lig_C"/>
    <property type="match status" value="1"/>
</dbReference>
<dbReference type="Pfam" id="PF01820">
    <property type="entry name" value="Dala_Dala_lig_N"/>
    <property type="match status" value="1"/>
</dbReference>
<dbReference type="PIRSF" id="PIRSF039102">
    <property type="entry name" value="Ddl/VanB"/>
    <property type="match status" value="1"/>
</dbReference>
<dbReference type="SUPFAM" id="SSF56059">
    <property type="entry name" value="Glutathione synthetase ATP-binding domain-like"/>
    <property type="match status" value="1"/>
</dbReference>
<dbReference type="SUPFAM" id="SSF52440">
    <property type="entry name" value="PreATP-grasp domain"/>
    <property type="match status" value="1"/>
</dbReference>
<dbReference type="PROSITE" id="PS50975">
    <property type="entry name" value="ATP_GRASP"/>
    <property type="match status" value="1"/>
</dbReference>
<dbReference type="PROSITE" id="PS00843">
    <property type="entry name" value="DALA_DALA_LIGASE_1"/>
    <property type="match status" value="1"/>
</dbReference>
<sequence>MIPTIAILSGGFSCEREISLMSGKAVKKALDSLSYNAIEIDVDSNIAEKLKKINPGLAFIALHGPYGEDGCIQGLLEILGIKYTHSGVMASAVAINKVMSKHIFRSLNIDTPKGYVISREDVLKNNIKIDYPYVLKPINEGSSIGVYIIFSHEDYLELKNNSSTIMEKMIVEEYIPGIELHTAVLLDEAIGTIEVRPKNKFYDYEAKYTDGFAEHIFPAKIPDNIYKMTLEHALKIHQFLGCKTISRSDFRYNPKNNTLKMLEINTHPGFTELSLVPEIAKLAKGINFNELVKIIIEDSLQHKNIRDLSHVEQYY</sequence>
<proteinExistence type="inferred from homology"/>
<keyword id="KW-0067">ATP-binding</keyword>
<keyword id="KW-0133">Cell shape</keyword>
<keyword id="KW-0961">Cell wall biogenesis/degradation</keyword>
<keyword id="KW-0963">Cytoplasm</keyword>
<keyword id="KW-0436">Ligase</keyword>
<keyword id="KW-0460">Magnesium</keyword>
<keyword id="KW-0464">Manganese</keyword>
<keyword id="KW-0479">Metal-binding</keyword>
<keyword id="KW-0547">Nucleotide-binding</keyword>
<keyword id="KW-0573">Peptidoglycan synthesis</keyword>
<evidence type="ECO:0000250" key="1"/>
<evidence type="ECO:0000255" key="2">
    <source>
        <dbReference type="HAMAP-Rule" id="MF_00047"/>
    </source>
</evidence>
<organism>
    <name type="scientific">Wolbachia pipientis wMel</name>
    <dbReference type="NCBI Taxonomy" id="163164"/>
    <lineage>
        <taxon>Bacteria</taxon>
        <taxon>Pseudomonadati</taxon>
        <taxon>Pseudomonadota</taxon>
        <taxon>Alphaproteobacteria</taxon>
        <taxon>Rickettsiales</taxon>
        <taxon>Anaplasmataceae</taxon>
        <taxon>Wolbachieae</taxon>
        <taxon>Wolbachia</taxon>
    </lineage>
</organism>
<reference key="1">
    <citation type="journal article" date="2004" name="PLoS Biol.">
        <title>Phylogenomics of the reproductive parasite Wolbachia pipientis wMel: a streamlined genome overrun by mobile genetic elements.</title>
        <authorList>
            <person name="Wu M."/>
            <person name="Sun L.V."/>
            <person name="Vamathevan J.J."/>
            <person name="Riegler M."/>
            <person name="DeBoy R.T."/>
            <person name="Brownlie J.C."/>
            <person name="McGraw E.A."/>
            <person name="Martin W."/>
            <person name="Esser C."/>
            <person name="Ahmadinejad N."/>
            <person name="Wiegand C."/>
            <person name="Madupu R."/>
            <person name="Beanan M.J."/>
            <person name="Brinkac L.M."/>
            <person name="Daugherty S.C."/>
            <person name="Durkin A.S."/>
            <person name="Kolonay J.F."/>
            <person name="Nelson W.C."/>
            <person name="Mohamoud Y."/>
            <person name="Lee P."/>
            <person name="Berry K.J."/>
            <person name="Young M.B."/>
            <person name="Utterback T.R."/>
            <person name="Weidman J.F."/>
            <person name="Nierman W.C."/>
            <person name="Paulsen I.T."/>
            <person name="Nelson K.E."/>
            <person name="Tettelin H."/>
            <person name="O'Neill S.L."/>
            <person name="Eisen J.A."/>
        </authorList>
    </citation>
    <scope>NUCLEOTIDE SEQUENCE [LARGE SCALE GENOMIC DNA]</scope>
</reference>